<keyword id="KW-0997">Cell inner membrane</keyword>
<keyword id="KW-1003">Cell membrane</keyword>
<keyword id="KW-0472">Membrane</keyword>
<keyword id="KW-1185">Reference proteome</keyword>
<keyword id="KW-0677">Repeat</keyword>
<keyword id="KW-0812">Transmembrane</keyword>
<keyword id="KW-1133">Transmembrane helix</keyword>
<keyword id="KW-0813">Transport</keyword>
<accession>P31549</accession>
<accession>P75636</accession>
<name>THIP_ECOLI</name>
<gene>
    <name type="primary">thiP</name>
    <name type="synonym">yabK</name>
    <name type="ordered locus">b0067</name>
    <name type="ordered locus">JW0066</name>
</gene>
<proteinExistence type="evidence at protein level"/>
<sequence length="536" mass="59533">MATRRQPLIPGWLIPGVSATTLVVAVALAAFLALWWNAPQDDWVAVWQDSYLWHVVRFSFWQAFLSALLSVIPAIFLARALYRRRFPGRLALLRLCAMTLILPVLVAVFGILSVYGRQGWLATLCQSLGLEWTFSPYGLQGILLAHVFFNLPMASRLLLQALENIPGEQRQLAAQLGMRSWHFFRFVEWPWLRRQIPPVAALIFMLCFASFATVLSLGGGPQATTIELAIYQALSYDYDPARAAMLALLQMVCCLGLVLLSQRLSKAIAPGTTLLQGWRDPDDRLHSRICDTVLIVLALLLLLPPLLAVIVDGVNRQLPEVLAQPVLWQALWTSLRIALAAGVLCVVLTMMLLWSSRELRARQKMLAGQVLEMSGMLILAMPGIVLATGFFLLLNNTIGLPQSADGIVIFTNALMAIPYALKVLENPMRDITARYSMLCQSLGIEGWSRLKVVELRALKRPLAQALAFACVLSIGDFGVVALFGNDDFRTLPFYLYQQIGSYRSQDGAVTALILLLLCFLLFTVIEKLPGRNVKTD</sequence>
<organism>
    <name type="scientific">Escherichia coli (strain K12)</name>
    <dbReference type="NCBI Taxonomy" id="83333"/>
    <lineage>
        <taxon>Bacteria</taxon>
        <taxon>Pseudomonadati</taxon>
        <taxon>Pseudomonadota</taxon>
        <taxon>Gammaproteobacteria</taxon>
        <taxon>Enterobacterales</taxon>
        <taxon>Enterobacteriaceae</taxon>
        <taxon>Escherichia</taxon>
    </lineage>
</organism>
<dbReference type="EMBL" id="U00096">
    <property type="protein sequence ID" value="AAC73178.1"/>
    <property type="molecule type" value="Genomic_DNA"/>
</dbReference>
<dbReference type="EMBL" id="AP009048">
    <property type="protein sequence ID" value="BAB96636.2"/>
    <property type="molecule type" value="Genomic_DNA"/>
</dbReference>
<dbReference type="PIR" id="C64728">
    <property type="entry name" value="C64728"/>
</dbReference>
<dbReference type="RefSeq" id="NP_414609.1">
    <property type="nucleotide sequence ID" value="NC_000913.3"/>
</dbReference>
<dbReference type="RefSeq" id="WP_000235721.1">
    <property type="nucleotide sequence ID" value="NZ_STEB01000010.1"/>
</dbReference>
<dbReference type="SMR" id="P31549"/>
<dbReference type="BioGRID" id="4263358">
    <property type="interactions" value="12"/>
</dbReference>
<dbReference type="BioGRID" id="849186">
    <property type="interactions" value="1"/>
</dbReference>
<dbReference type="ComplexPortal" id="CPX-4387">
    <property type="entry name" value="Thiamine ABC transporter complex"/>
</dbReference>
<dbReference type="DIP" id="DIP-10989N"/>
<dbReference type="FunCoup" id="P31549">
    <property type="interactions" value="270"/>
</dbReference>
<dbReference type="IntAct" id="P31549">
    <property type="interactions" value="1"/>
</dbReference>
<dbReference type="STRING" id="511145.b0067"/>
<dbReference type="TCDB" id="3.A.1.19.1">
    <property type="family name" value="the atp-binding cassette (abc) superfamily"/>
</dbReference>
<dbReference type="PaxDb" id="511145-b0067"/>
<dbReference type="EnsemblBacteria" id="AAC73178">
    <property type="protein sequence ID" value="AAC73178"/>
    <property type="gene ID" value="b0067"/>
</dbReference>
<dbReference type="GeneID" id="944784"/>
<dbReference type="KEGG" id="ecj:JW0066"/>
<dbReference type="KEGG" id="eco:b0067"/>
<dbReference type="PATRIC" id="fig|1411691.4.peg.2215"/>
<dbReference type="EchoBASE" id="EB1533"/>
<dbReference type="eggNOG" id="COG1178">
    <property type="taxonomic scope" value="Bacteria"/>
</dbReference>
<dbReference type="HOGENOM" id="CLU_021838_5_3_6"/>
<dbReference type="InParanoid" id="P31549"/>
<dbReference type="OMA" id="SYLWHVI"/>
<dbReference type="OrthoDB" id="7066776at2"/>
<dbReference type="PhylomeDB" id="P31549"/>
<dbReference type="BioCyc" id="EcoCyc:SFUB-MONOMER"/>
<dbReference type="BioCyc" id="MetaCyc:SFUB-MONOMER"/>
<dbReference type="PRO" id="PR:P31549"/>
<dbReference type="Proteomes" id="UP000000625">
    <property type="component" value="Chromosome"/>
</dbReference>
<dbReference type="GO" id="GO:0055052">
    <property type="term" value="C:ATP-binding cassette (ABC) transporter complex, substrate-binding subunit-containing"/>
    <property type="evidence" value="ECO:0000303"/>
    <property type="project" value="ComplexPortal"/>
</dbReference>
<dbReference type="GO" id="GO:0016020">
    <property type="term" value="C:membrane"/>
    <property type="evidence" value="ECO:0000303"/>
    <property type="project" value="ComplexPortal"/>
</dbReference>
<dbReference type="GO" id="GO:0005886">
    <property type="term" value="C:plasma membrane"/>
    <property type="evidence" value="ECO:0000314"/>
    <property type="project" value="EcoCyc"/>
</dbReference>
<dbReference type="GO" id="GO:0015234">
    <property type="term" value="F:thiamine transmembrane transporter activity"/>
    <property type="evidence" value="ECO:0000266"/>
    <property type="project" value="EcoCyc"/>
</dbReference>
<dbReference type="GO" id="GO:0071934">
    <property type="term" value="P:thiamine transmembrane transport"/>
    <property type="evidence" value="ECO:0000266"/>
    <property type="project" value="EcoCyc"/>
</dbReference>
<dbReference type="CDD" id="cd06261">
    <property type="entry name" value="TM_PBP2"/>
    <property type="match status" value="2"/>
</dbReference>
<dbReference type="FunFam" id="1.10.3720.10:FF:000044">
    <property type="entry name" value="Thiamine/thiamine pyrophosphate ABC transporter permease ThiP"/>
    <property type="match status" value="1"/>
</dbReference>
<dbReference type="FunFam" id="1.10.3720.10:FF:000048">
    <property type="entry name" value="Thiamine/thiamine pyrophosphate ABC transporter permease ThiP"/>
    <property type="match status" value="1"/>
</dbReference>
<dbReference type="Gene3D" id="1.10.3720.10">
    <property type="entry name" value="MetI-like"/>
    <property type="match status" value="2"/>
</dbReference>
<dbReference type="InterPro" id="IPR000515">
    <property type="entry name" value="MetI-like"/>
</dbReference>
<dbReference type="InterPro" id="IPR035906">
    <property type="entry name" value="MetI-like_sf"/>
</dbReference>
<dbReference type="InterPro" id="IPR005947">
    <property type="entry name" value="ThiP_ABC_transpt"/>
</dbReference>
<dbReference type="NCBIfam" id="NF006951">
    <property type="entry name" value="PRK09433.1-2"/>
    <property type="match status" value="1"/>
</dbReference>
<dbReference type="NCBIfam" id="NF006953">
    <property type="entry name" value="PRK09433.1-4"/>
    <property type="match status" value="1"/>
</dbReference>
<dbReference type="NCBIfam" id="TIGR01253">
    <property type="entry name" value="thiP"/>
    <property type="match status" value="1"/>
</dbReference>
<dbReference type="PANTHER" id="PTHR30183">
    <property type="entry name" value="MOLYBDENUM TRANSPORT SYSTEM PERMEASE PROTEIN MODB"/>
    <property type="match status" value="1"/>
</dbReference>
<dbReference type="PANTHER" id="PTHR30183:SF9">
    <property type="entry name" value="THIAMINE TRANSPORT SYSTEM PERMEASE PROTEIN THIP"/>
    <property type="match status" value="1"/>
</dbReference>
<dbReference type="Pfam" id="PF00528">
    <property type="entry name" value="BPD_transp_1"/>
    <property type="match status" value="2"/>
</dbReference>
<dbReference type="SUPFAM" id="SSF161098">
    <property type="entry name" value="MetI-like"/>
    <property type="match status" value="2"/>
</dbReference>
<dbReference type="PROSITE" id="PS50928">
    <property type="entry name" value="ABC_TM1"/>
    <property type="match status" value="2"/>
</dbReference>
<reference key="1">
    <citation type="journal article" date="1992" name="Nucleic Acids Res.">
        <title>Systematic sequencing of the Escherichia coli genome: analysis of the 0-2.4 min region.</title>
        <authorList>
            <person name="Yura T."/>
            <person name="Mori H."/>
            <person name="Nagai H."/>
            <person name="Nagata T."/>
            <person name="Ishihama A."/>
            <person name="Fujita N."/>
            <person name="Isono K."/>
            <person name="Mizobuchi K."/>
            <person name="Nakata A."/>
        </authorList>
    </citation>
    <scope>NUCLEOTIDE SEQUENCE [LARGE SCALE GENOMIC DNA]</scope>
    <source>
        <strain>K12</strain>
    </source>
</reference>
<reference key="2">
    <citation type="journal article" date="1997" name="Science">
        <title>The complete genome sequence of Escherichia coli K-12.</title>
        <authorList>
            <person name="Blattner F.R."/>
            <person name="Plunkett G. III"/>
            <person name="Bloch C.A."/>
            <person name="Perna N.T."/>
            <person name="Burland V."/>
            <person name="Riley M."/>
            <person name="Collado-Vides J."/>
            <person name="Glasner J.D."/>
            <person name="Rode C.K."/>
            <person name="Mayhew G.F."/>
            <person name="Gregor J."/>
            <person name="Davis N.W."/>
            <person name="Kirkpatrick H.A."/>
            <person name="Goeden M.A."/>
            <person name="Rose D.J."/>
            <person name="Mau B."/>
            <person name="Shao Y."/>
        </authorList>
    </citation>
    <scope>NUCLEOTIDE SEQUENCE [LARGE SCALE GENOMIC DNA]</scope>
    <source>
        <strain>K12 / MG1655 / ATCC 47076</strain>
    </source>
</reference>
<reference key="3">
    <citation type="journal article" date="2006" name="Mol. Syst. Biol.">
        <title>Highly accurate genome sequences of Escherichia coli K-12 strains MG1655 and W3110.</title>
        <authorList>
            <person name="Hayashi K."/>
            <person name="Morooka N."/>
            <person name="Yamamoto Y."/>
            <person name="Fujita K."/>
            <person name="Isono K."/>
            <person name="Choi S."/>
            <person name="Ohtsubo E."/>
            <person name="Baba T."/>
            <person name="Wanner B.L."/>
            <person name="Mori H."/>
            <person name="Horiuchi T."/>
        </authorList>
    </citation>
    <scope>NUCLEOTIDE SEQUENCE [LARGE SCALE GENOMIC DNA]</scope>
    <scope>SEQUENCE REVISION TO 511</scope>
    <source>
        <strain>K12 / W3110 / ATCC 27325 / DSM 5911</strain>
    </source>
</reference>
<reference key="4">
    <citation type="journal article" date="2002" name="Biochim. Biophys. Acta">
        <title>Thiamine transport in Escherichia coli: the mechanism of inhibition by the sulfhydryl-specific modifier N-ethylmaleimide.</title>
        <authorList>
            <person name="Hollenbach A.D."/>
            <person name="Dickson K.A."/>
            <person name="Washabaugh M.W."/>
        </authorList>
    </citation>
    <scope>FUNCTION IN THIAMINE TRANSPORT</scope>
    <scope>ACTIVITY REGULATION</scope>
    <source>
        <strain>K12 / KG33</strain>
    </source>
</reference>
<reference key="5">
    <citation type="journal article" date="2005" name="Science">
        <title>Global topology analysis of the Escherichia coli inner membrane proteome.</title>
        <authorList>
            <person name="Daley D.O."/>
            <person name="Rapp M."/>
            <person name="Granseth E."/>
            <person name="Melen K."/>
            <person name="Drew D."/>
            <person name="von Heijne G."/>
        </authorList>
    </citation>
    <scope>SUBCELLULAR LOCATION</scope>
    <source>
        <strain>K12 / MG1655 / ATCC 47076</strain>
    </source>
</reference>
<evidence type="ECO:0000250" key="1">
    <source>
        <dbReference type="UniProtKB" id="Q8ZRV1"/>
    </source>
</evidence>
<evidence type="ECO:0000255" key="2"/>
<evidence type="ECO:0000255" key="3">
    <source>
        <dbReference type="PROSITE-ProRule" id="PRU00441"/>
    </source>
</evidence>
<evidence type="ECO:0000269" key="4">
    <source>
    </source>
</evidence>
<evidence type="ECO:0000269" key="5">
    <source>
    </source>
</evidence>
<evidence type="ECO:0000305" key="6"/>
<comment type="function">
    <text evidence="4 6">Part of the ABC transporter complex ThiBPQ involved in thiamine import (PubMed:12175925). Probably responsible for the translocation of the substrate across the membrane (Probable).</text>
</comment>
<comment type="activity regulation">
    <text evidence="4">Transport is inhibited by the sulfhydryl-specific modifier N-ethylmaleimide.</text>
</comment>
<comment type="subunit">
    <text evidence="1">The complex is composed of two ATP-binding proteins (ThiQ), two transmembrane proteins (ThiP) and a solute-binding protein (ThiB).</text>
</comment>
<comment type="subcellular location">
    <subcellularLocation>
        <location evidence="5">Cell inner membrane</location>
        <topology evidence="2">Multi-pass membrane protein</topology>
    </subcellularLocation>
</comment>
<comment type="similarity">
    <text evidence="6">Belongs to the binding-protein-dependent transport system permease family. CysTW subfamily.</text>
</comment>
<protein>
    <recommendedName>
        <fullName>Thiamine transport system permease protein ThiP</fullName>
    </recommendedName>
</protein>
<feature type="chain" id="PRO_0000060230" description="Thiamine transport system permease protein ThiP">
    <location>
        <begin position="1"/>
        <end position="536"/>
    </location>
</feature>
<feature type="transmembrane region" description="Helical" evidence="3">
    <location>
        <begin position="12"/>
        <end position="32"/>
    </location>
</feature>
<feature type="transmembrane region" description="Helical" evidence="3">
    <location>
        <begin position="58"/>
        <end position="78"/>
    </location>
</feature>
<feature type="transmembrane region" description="Helical" evidence="3">
    <location>
        <begin position="95"/>
        <end position="115"/>
    </location>
</feature>
<feature type="transmembrane region" description="Helical" evidence="3">
    <location>
        <begin position="134"/>
        <end position="154"/>
    </location>
</feature>
<feature type="transmembrane region" description="Helical" evidence="3">
    <location>
        <begin position="199"/>
        <end position="219"/>
    </location>
</feature>
<feature type="transmembrane region" description="Helical" evidence="3">
    <location>
        <begin position="240"/>
        <end position="260"/>
    </location>
</feature>
<feature type="transmembrane region" description="Helical" evidence="3">
    <location>
        <begin position="293"/>
        <end position="313"/>
    </location>
</feature>
<feature type="transmembrane region" description="Helical" evidence="3">
    <location>
        <begin position="334"/>
        <end position="354"/>
    </location>
</feature>
<feature type="transmembrane region" description="Helical" evidence="3">
    <location>
        <begin position="374"/>
        <end position="394"/>
    </location>
</feature>
<feature type="transmembrane region" description="Helical" evidence="3">
    <location>
        <begin position="404"/>
        <end position="424"/>
    </location>
</feature>
<feature type="transmembrane region" description="Helical" evidence="3">
    <location>
        <begin position="463"/>
        <end position="483"/>
    </location>
</feature>
<feature type="transmembrane region" description="Helical" evidence="3">
    <location>
        <begin position="506"/>
        <end position="526"/>
    </location>
</feature>
<feature type="domain" description="ABC transmembrane type-1 1" evidence="3">
    <location>
        <begin position="56"/>
        <end position="261"/>
    </location>
</feature>
<feature type="domain" description="ABC transmembrane type-1 2" evidence="3">
    <location>
        <begin position="331"/>
        <end position="525"/>
    </location>
</feature>